<proteinExistence type="evidence at transcript level"/>
<sequence>MKWLGESKNMVVNGRRNGNRLSAELRQNQPKLHSPGRENLRTSKNVPDRRSGRFGNVAFEAQSRYVPSSGMSAKELSENDDLATSLVLDPYLGFQTHKMNARFRPIKGRQEELKEVIENFKKKEHLEKTFKNLVAGDWSRHYFLNKTKMQEKHFKEHVFIYLRMFATSSGFEILPCNRYSSERNGAKIVATKEWKRNDKIELLVGCIAELSEAEENMLLRHGENDFSVMYSTRKNCAQLWLGPAAFINHDCRPNCKFVSTGRDTACVKALRDIEPGEEISCYYGDGFFGENNEFCECYTCERRATGAFKSRVGLNEPGPLINSKYGLRETDKRLNRLKKLGDSGKNSDSQSVSSNTDADTSQEKDMSNRKSNGMRKRSKSRTLRRRSMSRIPVSSSSTSSKLPHINNSRVPKRLRKPPKPFHSKLKIRCHRKKVEQKKASKKLEVSNLVLKEPKVVLYKNLAIKKDRESQGAVPVTETTGCLTRHAAREYKLNSLKGAHSHGESSSCTYITRSSLRTRFKSNDMSEAKLQHNSVDGYRSSHGTVLQVDKSEPLCQSTCKNELLQETPRQTIRFHRNNFNTSTRNSRQNRYIKQASKVEDSVSSVYDQSSKDHALPDLGNSHCDLGEGNALIQTSPDYKSFESSADEYPLVTSEITKTKKNNRTAKNKKSRRITRYDAQLILENSTGIPKLTLRRRHDSNSSKTNEKENEGMSSSKISIKLSKDHEKDNGLYVAKLNNGFNSGSGSTSTKLKIQLKRDEENRTAFPNENGMYCNDTLSLLETRMKVDGYDHYEEESVEESSTEEDEEEEDEYDDEFEDDFIPLPPAKRLRLIVGKDSIDIDISSRRREDQSLRLNA</sequence>
<keyword id="KW-0156">Chromatin regulator</keyword>
<keyword id="KW-0158">Chromosome</keyword>
<keyword id="KW-1017">Isopeptide bond</keyword>
<keyword id="KW-0479">Metal-binding</keyword>
<keyword id="KW-0489">Methyltransferase</keyword>
<keyword id="KW-0517">Myogenesis</keyword>
<keyword id="KW-0539">Nucleus</keyword>
<keyword id="KW-1185">Reference proteome</keyword>
<keyword id="KW-0678">Repressor</keyword>
<keyword id="KW-0949">S-adenosyl-L-methionine</keyword>
<keyword id="KW-0804">Transcription</keyword>
<keyword id="KW-0805">Transcription regulation</keyword>
<keyword id="KW-0808">Transferase</keyword>
<keyword id="KW-0832">Ubl conjugation</keyword>
<keyword id="KW-0862">Zinc</keyword>
<comment type="function">
    <text evidence="2 3">Histone methyltransferase that specifically methylates monomethylated 'Lys-20' (H4K20me1) and dimethylated 'Lys-20' (H4K20me2) of histone H4 to produce respectively dimethylated 'Lys-20' (H4K20me2) and trimethylated 'Lys-20' (H4K20me3) and thus regulates transcription and maintenance of genome integrity. In vitro also methylates unmodified 'Lys-20' (H4K20me0) of histone H4 and nucleosomes (By similarity). H4 'Lys-20' trimethylation represents a specific tag for epigenetic transcriptional repression. Mainly functions in pericentric heterochromatin regions, thereby playing a central role in the establishment of constitutive heterochromatin in these regions. KMT5B is targeted to histone H3 via its interaction with RB1 family proteins (RB1, RBL1 and RBL2) (By similarity). Plays a role in myogenesis by regulating the expression of target genes, such as EID3. Facilitates TP53BP1 foci formation upon DNA damage and proficient non-homologous end-joining (NHEJ)-directed DNA repair by catalyzing the di- and trimethylation of 'Lys-20' of histone H4 (By similarity). May play a role in class switch reconbination by catalyzing the di- and trimethylation of 'Lys-20' of histone H4 (By similarity).</text>
</comment>
<comment type="catalytic activity">
    <reaction evidence="3">
        <text>N(6)-methyl-L-lysyl(20)-[histone H4] + S-adenosyl-L-methionine = N(6),N(6)-dimethyl-L-lysyl(20)-[histone H4] + S-adenosyl-L-homocysteine + H(+)</text>
        <dbReference type="Rhea" id="RHEA:60348"/>
        <dbReference type="Rhea" id="RHEA-COMP:15555"/>
        <dbReference type="Rhea" id="RHEA-COMP:15556"/>
        <dbReference type="ChEBI" id="CHEBI:15378"/>
        <dbReference type="ChEBI" id="CHEBI:57856"/>
        <dbReference type="ChEBI" id="CHEBI:59789"/>
        <dbReference type="ChEBI" id="CHEBI:61929"/>
        <dbReference type="ChEBI" id="CHEBI:61976"/>
        <dbReference type="EC" id="2.1.1.362"/>
    </reaction>
    <physiologicalReaction direction="left-to-right" evidence="3">
        <dbReference type="Rhea" id="RHEA:60349"/>
    </physiologicalReaction>
</comment>
<comment type="catalytic activity">
    <reaction evidence="3">
        <text>N(6),N(6)-dimethyl-L-lysyl(20)-[histone H4] + S-adenosyl-L-methionine = N(6),N(6),N(6)-trimethyl-L-lysyl(20)-[histone H4] + S-adenosyl-L-homocysteine + H(+)</text>
        <dbReference type="Rhea" id="RHEA:61992"/>
        <dbReference type="Rhea" id="RHEA-COMP:15556"/>
        <dbReference type="Rhea" id="RHEA-COMP:15998"/>
        <dbReference type="ChEBI" id="CHEBI:15378"/>
        <dbReference type="ChEBI" id="CHEBI:57856"/>
        <dbReference type="ChEBI" id="CHEBI:59789"/>
        <dbReference type="ChEBI" id="CHEBI:61961"/>
        <dbReference type="ChEBI" id="CHEBI:61976"/>
    </reaction>
    <physiologicalReaction direction="left-to-right" evidence="3">
        <dbReference type="Rhea" id="RHEA:61993"/>
    </physiologicalReaction>
</comment>
<comment type="catalytic activity">
    <reaction evidence="3">
        <text>L-lysyl(20)-[histone H4] + S-adenosyl-L-methionine = N(6)-methyl-L-lysyl(20)-[histone H4] + S-adenosyl-L-homocysteine + H(+)</text>
        <dbReference type="Rhea" id="RHEA:60344"/>
        <dbReference type="Rhea" id="RHEA-COMP:15554"/>
        <dbReference type="Rhea" id="RHEA-COMP:15555"/>
        <dbReference type="ChEBI" id="CHEBI:15378"/>
        <dbReference type="ChEBI" id="CHEBI:29969"/>
        <dbReference type="ChEBI" id="CHEBI:57856"/>
        <dbReference type="ChEBI" id="CHEBI:59789"/>
        <dbReference type="ChEBI" id="CHEBI:61929"/>
        <dbReference type="EC" id="2.1.1.361"/>
    </reaction>
    <physiologicalReaction direction="left-to-right" evidence="3">
        <dbReference type="Rhea" id="RHEA:60345"/>
    </physiologicalReaction>
</comment>
<comment type="subcellular location">
    <subcellularLocation>
        <location>Nucleus</location>
    </subcellularLocation>
    <subcellularLocation>
        <location evidence="1">Chromosome</location>
    </subcellularLocation>
    <text evidence="1">Associated with pericentric heterochromatin.</text>
</comment>
<comment type="similarity">
    <text evidence="5">Belongs to the class V-like SAM-binding methyltransferase superfamily. Histone-lysine methyltransferase family. Suvar4-20 subfamily.</text>
</comment>
<evidence type="ECO:0000250" key="1"/>
<evidence type="ECO:0000250" key="2">
    <source>
        <dbReference type="UniProtKB" id="Q3U8K7"/>
    </source>
</evidence>
<evidence type="ECO:0000250" key="3">
    <source>
        <dbReference type="UniProtKB" id="Q4FZB7"/>
    </source>
</evidence>
<evidence type="ECO:0000255" key="4">
    <source>
        <dbReference type="PROSITE-ProRule" id="PRU00190"/>
    </source>
</evidence>
<evidence type="ECO:0000255" key="5">
    <source>
        <dbReference type="PROSITE-ProRule" id="PRU00903"/>
    </source>
</evidence>
<evidence type="ECO:0000256" key="6">
    <source>
        <dbReference type="SAM" id="MobiDB-lite"/>
    </source>
</evidence>
<evidence type="ECO:0000305" key="7"/>
<feature type="chain" id="PRO_0000281791" description="Histone-lysine N-methyltransferase KMT5B-A">
    <location>
        <begin position="1"/>
        <end position="855"/>
    </location>
</feature>
<feature type="domain" description="SET" evidence="4">
    <location>
        <begin position="169"/>
        <end position="284"/>
    </location>
</feature>
<feature type="region of interest" description="Disordered" evidence="6">
    <location>
        <begin position="18"/>
        <end position="52"/>
    </location>
</feature>
<feature type="region of interest" description="Disordered" evidence="6">
    <location>
        <begin position="339"/>
        <end position="420"/>
    </location>
</feature>
<feature type="region of interest" description="Disordered" evidence="6">
    <location>
        <begin position="687"/>
        <end position="715"/>
    </location>
</feature>
<feature type="region of interest" description="Disordered" evidence="6">
    <location>
        <begin position="791"/>
        <end position="818"/>
    </location>
</feature>
<feature type="compositionally biased region" description="Basic and acidic residues" evidence="6">
    <location>
        <begin position="35"/>
        <end position="51"/>
    </location>
</feature>
<feature type="compositionally biased region" description="Polar residues" evidence="6">
    <location>
        <begin position="344"/>
        <end position="359"/>
    </location>
</feature>
<feature type="compositionally biased region" description="Basic residues" evidence="6">
    <location>
        <begin position="372"/>
        <end position="388"/>
    </location>
</feature>
<feature type="compositionally biased region" description="Low complexity" evidence="6">
    <location>
        <begin position="389"/>
        <end position="400"/>
    </location>
</feature>
<feature type="compositionally biased region" description="Basic residues" evidence="6">
    <location>
        <begin position="410"/>
        <end position="420"/>
    </location>
</feature>
<feature type="compositionally biased region" description="Basic and acidic residues" evidence="6">
    <location>
        <begin position="697"/>
        <end position="709"/>
    </location>
</feature>
<feature type="binding site" evidence="3">
    <location>
        <position position="97"/>
    </location>
    <ligand>
        <name>S-adenosyl-L-methionine</name>
        <dbReference type="ChEBI" id="CHEBI:59789"/>
    </ligand>
</feature>
<feature type="binding site" evidence="3">
    <location>
        <begin position="179"/>
        <end position="182"/>
    </location>
    <ligand>
        <name>S-adenosyl-L-methionine</name>
        <dbReference type="ChEBI" id="CHEBI:59789"/>
    </ligand>
</feature>
<feature type="binding site" evidence="3">
    <location>
        <position position="186"/>
    </location>
    <ligand>
        <name>S-adenosyl-L-methionine</name>
        <dbReference type="ChEBI" id="CHEBI:59789"/>
    </ligand>
</feature>
<feature type="binding site" evidence="3">
    <location>
        <position position="233"/>
    </location>
    <ligand>
        <name>S-adenosyl-L-methionine</name>
        <dbReference type="ChEBI" id="CHEBI:59789"/>
    </ligand>
</feature>
<feature type="binding site" evidence="3">
    <location>
        <begin position="248"/>
        <end position="249"/>
    </location>
    <ligand>
        <name>S-adenosyl-L-methionine</name>
        <dbReference type="ChEBI" id="CHEBI:59789"/>
    </ligand>
</feature>
<feature type="binding site" evidence="3">
    <location>
        <position position="251"/>
    </location>
    <ligand>
        <name>Zn(2+)</name>
        <dbReference type="ChEBI" id="CHEBI:29105"/>
    </ligand>
</feature>
<feature type="binding site" evidence="3">
    <location>
        <position position="295"/>
    </location>
    <ligand>
        <name>Zn(2+)</name>
        <dbReference type="ChEBI" id="CHEBI:29105"/>
    </ligand>
</feature>
<feature type="binding site" evidence="3">
    <location>
        <position position="296"/>
    </location>
    <ligand>
        <name>S-adenosyl-L-methionine</name>
        <dbReference type="ChEBI" id="CHEBI:59789"/>
    </ligand>
</feature>
<feature type="binding site" evidence="3">
    <location>
        <position position="297"/>
    </location>
    <ligand>
        <name>Zn(2+)</name>
        <dbReference type="ChEBI" id="CHEBI:29105"/>
    </ligand>
</feature>
<feature type="binding site" evidence="3">
    <location>
        <position position="300"/>
    </location>
    <ligand>
        <name>Zn(2+)</name>
        <dbReference type="ChEBI" id="CHEBI:29105"/>
    </ligand>
</feature>
<feature type="cross-link" description="Glycyl lysine isopeptide (Lys-Gly) (interchain with G-Cter in SUMO2)" evidence="3">
    <location>
        <position position="528"/>
    </location>
</feature>
<reference key="1">
    <citation type="submission" date="2004-06" db="EMBL/GenBank/DDBJ databases">
        <authorList>
            <consortium name="NIH - Xenopus Gene Collection (XGC) project"/>
        </authorList>
    </citation>
    <scope>NUCLEOTIDE SEQUENCE [LARGE SCALE MRNA]</scope>
    <source>
        <tissue>Spleen</tissue>
    </source>
</reference>
<protein>
    <recommendedName>
        <fullName evidence="7">Histone-lysine N-methyltransferase KMT5B-A</fullName>
    </recommendedName>
    <alternativeName>
        <fullName evidence="3">Lysine-specific methyltransferase 5B-A</fullName>
    </alternativeName>
    <alternativeName>
        <fullName>Suppressor of variegation 4-20 homolog 1-A</fullName>
        <shortName>Su(var)4-20 homolog 1-A</shortName>
        <shortName>Suv4-20h1-A</shortName>
    </alternativeName>
    <alternativeName>
        <fullName evidence="7">[histone H4]-N-methyl-L-lysine20 N-methyltransferase KMT5B</fullName>
        <ecNumber evidence="3">2.1.1.362</ecNumber>
    </alternativeName>
    <alternativeName>
        <fullName evidence="7">[histone H4]-lysine20 N-methyltransferase KMT5B</fullName>
        <ecNumber evidence="3">2.1.1.361</ecNumber>
    </alternativeName>
</protein>
<gene>
    <name evidence="3" type="primary">kmt5b-a</name>
    <name type="synonym">suv420h1-a</name>
</gene>
<accession>Q6GP17</accession>
<dbReference type="EC" id="2.1.1.362" evidence="3"/>
<dbReference type="EC" id="2.1.1.361" evidence="3"/>
<dbReference type="EMBL" id="BC073331">
    <property type="protein sequence ID" value="AAH73331.1"/>
    <property type="molecule type" value="mRNA"/>
</dbReference>
<dbReference type="RefSeq" id="NP_001085777.1">
    <property type="nucleotide sequence ID" value="NM_001092308.1"/>
</dbReference>
<dbReference type="SMR" id="Q6GP17"/>
<dbReference type="DNASU" id="444204"/>
<dbReference type="GeneID" id="444204"/>
<dbReference type="KEGG" id="xla:444204"/>
<dbReference type="AGR" id="Xenbase:XB-GENE-866439"/>
<dbReference type="CTD" id="444204"/>
<dbReference type="Xenbase" id="XB-GENE-866439">
    <property type="gene designation" value="kmt5b.S"/>
</dbReference>
<dbReference type="OrthoDB" id="6627536at2759"/>
<dbReference type="Proteomes" id="UP000186698">
    <property type="component" value="Chromosome 4S"/>
</dbReference>
<dbReference type="Bgee" id="444204">
    <property type="expression patterns" value="Expressed in lung and 19 other cell types or tissues"/>
</dbReference>
<dbReference type="GO" id="GO:0005694">
    <property type="term" value="C:chromosome"/>
    <property type="evidence" value="ECO:0007669"/>
    <property type="project" value="UniProtKB-SubCell"/>
</dbReference>
<dbReference type="GO" id="GO:0005634">
    <property type="term" value="C:nucleus"/>
    <property type="evidence" value="ECO:0000318"/>
    <property type="project" value="GO_Central"/>
</dbReference>
<dbReference type="GO" id="GO:0003682">
    <property type="term" value="F:chromatin binding"/>
    <property type="evidence" value="ECO:0000250"/>
    <property type="project" value="UniProtKB"/>
</dbReference>
<dbReference type="GO" id="GO:0042799">
    <property type="term" value="F:histone H4K20 methyltransferase activity"/>
    <property type="evidence" value="ECO:0000250"/>
    <property type="project" value="UniProtKB"/>
</dbReference>
<dbReference type="GO" id="GO:0140944">
    <property type="term" value="F:histone H4K20 monomethyltransferase activity"/>
    <property type="evidence" value="ECO:0007669"/>
    <property type="project" value="UniProtKB-EC"/>
</dbReference>
<dbReference type="GO" id="GO:0140941">
    <property type="term" value="F:histone H4K20me methyltransferase activity"/>
    <property type="evidence" value="ECO:0007669"/>
    <property type="project" value="UniProtKB-EC"/>
</dbReference>
<dbReference type="GO" id="GO:0046872">
    <property type="term" value="F:metal ion binding"/>
    <property type="evidence" value="ECO:0007669"/>
    <property type="project" value="UniProtKB-KW"/>
</dbReference>
<dbReference type="GO" id="GO:1904047">
    <property type="term" value="F:S-adenosyl-L-methionine binding"/>
    <property type="evidence" value="ECO:0000250"/>
    <property type="project" value="UniProtKB"/>
</dbReference>
<dbReference type="GO" id="GO:0006281">
    <property type="term" value="P:DNA repair"/>
    <property type="evidence" value="ECO:0000250"/>
    <property type="project" value="UniProtKB"/>
</dbReference>
<dbReference type="GO" id="GO:0032259">
    <property type="term" value="P:methylation"/>
    <property type="evidence" value="ECO:0007669"/>
    <property type="project" value="UniProtKB-KW"/>
</dbReference>
<dbReference type="GO" id="GO:0007517">
    <property type="term" value="P:muscle organ development"/>
    <property type="evidence" value="ECO:0007669"/>
    <property type="project" value="UniProtKB-KW"/>
</dbReference>
<dbReference type="GO" id="GO:2001034">
    <property type="term" value="P:positive regulation of double-strand break repair via nonhomologous end joining"/>
    <property type="evidence" value="ECO:0000250"/>
    <property type="project" value="UniProtKB"/>
</dbReference>
<dbReference type="GO" id="GO:0045830">
    <property type="term" value="P:positive regulation of isotype switching"/>
    <property type="evidence" value="ECO:0000250"/>
    <property type="project" value="UniProtKB"/>
</dbReference>
<dbReference type="CDD" id="cd19184">
    <property type="entry name" value="SET_KMT5B"/>
    <property type="match status" value="1"/>
</dbReference>
<dbReference type="FunFam" id="1.10.10.1700:FF:000001">
    <property type="entry name" value="Histone-lysine N-methyltransferase"/>
    <property type="match status" value="1"/>
</dbReference>
<dbReference type="FunFam" id="2.170.270.10:FF:000006">
    <property type="entry name" value="Histone-lysine N-methyltransferase"/>
    <property type="match status" value="1"/>
</dbReference>
<dbReference type="Gene3D" id="1.10.10.1700">
    <property type="entry name" value="Histone-lysine N-methyltransferase"/>
    <property type="match status" value="1"/>
</dbReference>
<dbReference type="Gene3D" id="2.170.270.10">
    <property type="entry name" value="SET domain"/>
    <property type="match status" value="1"/>
</dbReference>
<dbReference type="InterPro" id="IPR041938">
    <property type="entry name" value="Hist-Lys_N-MTase_N"/>
</dbReference>
<dbReference type="InterPro" id="IPR044424">
    <property type="entry name" value="KMT5B_SET"/>
</dbReference>
<dbReference type="InterPro" id="IPR001214">
    <property type="entry name" value="SET_dom"/>
</dbReference>
<dbReference type="InterPro" id="IPR046341">
    <property type="entry name" value="SET_dom_sf"/>
</dbReference>
<dbReference type="InterPro" id="IPR039977">
    <property type="entry name" value="Suv4-20/Set9"/>
</dbReference>
<dbReference type="InterPro" id="IPR025790">
    <property type="entry name" value="Suv4-20_animal"/>
</dbReference>
<dbReference type="PANTHER" id="PTHR12977:SF12">
    <property type="entry name" value="HISTONE-LYSINE N-METHYLTRANSFERASE KMT5B"/>
    <property type="match status" value="1"/>
</dbReference>
<dbReference type="PANTHER" id="PTHR12977">
    <property type="entry name" value="SUPPRESSOR OF VARIEGATION 4-20-RELATED"/>
    <property type="match status" value="1"/>
</dbReference>
<dbReference type="Pfam" id="PF00856">
    <property type="entry name" value="SET"/>
    <property type="match status" value="1"/>
</dbReference>
<dbReference type="SMART" id="SM00317">
    <property type="entry name" value="SET"/>
    <property type="match status" value="1"/>
</dbReference>
<dbReference type="SUPFAM" id="SSF82199">
    <property type="entry name" value="SET domain"/>
    <property type="match status" value="1"/>
</dbReference>
<dbReference type="PROSITE" id="PS51570">
    <property type="entry name" value="SAM_MT43_SUVAR420_2"/>
    <property type="match status" value="1"/>
</dbReference>
<dbReference type="PROSITE" id="PS50280">
    <property type="entry name" value="SET"/>
    <property type="match status" value="1"/>
</dbReference>
<name>KT5BA_XENLA</name>
<organism>
    <name type="scientific">Xenopus laevis</name>
    <name type="common">African clawed frog</name>
    <dbReference type="NCBI Taxonomy" id="8355"/>
    <lineage>
        <taxon>Eukaryota</taxon>
        <taxon>Metazoa</taxon>
        <taxon>Chordata</taxon>
        <taxon>Craniata</taxon>
        <taxon>Vertebrata</taxon>
        <taxon>Euteleostomi</taxon>
        <taxon>Amphibia</taxon>
        <taxon>Batrachia</taxon>
        <taxon>Anura</taxon>
        <taxon>Pipoidea</taxon>
        <taxon>Pipidae</taxon>
        <taxon>Xenopodinae</taxon>
        <taxon>Xenopus</taxon>
        <taxon>Xenopus</taxon>
    </lineage>
</organism>